<protein>
    <recommendedName>
        <fullName>Protein U2</fullName>
    </recommendedName>
</protein>
<keyword id="KW-1185">Reference proteome</keyword>
<evidence type="ECO:0000305" key="1"/>
<accession>Q9Z0C9</accession>
<gene>
    <name type="primary">DNA-U2</name>
    <name type="synonym">C7</name>
</gene>
<dbReference type="EMBL" id="AB000926">
    <property type="protein sequence ID" value="BAA33986.1"/>
    <property type="molecule type" value="Genomic_DNA"/>
</dbReference>
<dbReference type="RefSeq" id="NP_619765.1">
    <property type="nucleotide sequence ID" value="NC_003644.1"/>
</dbReference>
<dbReference type="SMR" id="Q9Z0C9"/>
<dbReference type="KEGG" id="vg:995284"/>
<dbReference type="Proteomes" id="UP001507899">
    <property type="component" value="Genome"/>
</dbReference>
<proteinExistence type="inferred from homology"/>
<reference key="1">
    <citation type="journal article" date="1998" name="J. Gen. Virol.">
        <title>Sequences of ten circular ssDNA components associated with the milk vetch dwarf virus genome.</title>
        <authorList>
            <person name="Sano Y."/>
            <person name="Wada M."/>
            <person name="Hashimoto Y."/>
            <person name="Matsumoto T."/>
            <person name="Kojima M."/>
        </authorList>
    </citation>
    <scope>NUCLEOTIDE SEQUENCE [GENOMIC DNA]</scope>
</reference>
<feature type="chain" id="PRO_0000378544" description="Protein U2">
    <location>
        <begin position="1"/>
        <end position="125"/>
    </location>
</feature>
<organism>
    <name type="scientific">Milk vetch dwarf virus (isolate N)</name>
    <name type="common">MDV</name>
    <dbReference type="NCBI Taxonomy" id="291605"/>
    <lineage>
        <taxon>Viruses</taxon>
        <taxon>Monodnaviria</taxon>
        <taxon>Shotokuvirae</taxon>
        <taxon>Cressdnaviricota</taxon>
        <taxon>Arfiviricetes</taxon>
        <taxon>Mulpavirales</taxon>
        <taxon>Nanoviridae</taxon>
        <taxon>Nanovirus</taxon>
        <taxon>Milk vetch dwarf virus</taxon>
    </lineage>
</organism>
<name>U2_MDV1</name>
<comment type="similarity">
    <text evidence="1">Belongs to the nanovirus U2 protein family.</text>
</comment>
<sequence length="125" mass="15035">MEDFKQPKLSYGEIVQMKEEQDAFWSCYHEFLRRNEDVLGEMCRRHGRKLPAYPKLPTYAPIRWVLKTKAIYDVRVDECKSCSHEEISRRDYNPIKKEGLKDLYDSGNYRYQVYYSSSCNRDKSD</sequence>
<organismHost>
    <name type="scientific">Astragalus sinicus</name>
    <name type="common">Chinese milk vetch</name>
    <dbReference type="NCBI Taxonomy" id="47065"/>
</organismHost>
<organismHost>
    <name type="scientific">Glycine max</name>
    <name type="common">Soybean</name>
    <name type="synonym">Glycine hispida</name>
    <dbReference type="NCBI Taxonomy" id="3847"/>
</organismHost>
<organismHost>
    <name type="scientific">Phaseolus vulgaris</name>
    <name type="common">Kidney bean</name>
    <name type="synonym">French bean</name>
    <dbReference type="NCBI Taxonomy" id="3885"/>
</organismHost>
<organismHost>
    <name type="scientific">Pisum sativum</name>
    <name type="common">Garden pea</name>
    <name type="synonym">Lathyrus oleraceus</name>
    <dbReference type="NCBI Taxonomy" id="3888"/>
</organismHost>
<organismHost>
    <name type="scientific">Vicia faba</name>
    <name type="common">Broad bean</name>
    <name type="synonym">Faba vulgaris</name>
    <dbReference type="NCBI Taxonomy" id="3906"/>
</organismHost>